<keyword id="KW-0560">Oxidoreductase</keyword>
<keyword id="KW-0819">tRNA processing</keyword>
<gene>
    <name evidence="1" type="primary">trhO</name>
    <name type="ordered locus">WD_1135</name>
</gene>
<proteinExistence type="inferred from homology"/>
<name>TRHO_WOLPM</name>
<evidence type="ECO:0000255" key="1">
    <source>
        <dbReference type="HAMAP-Rule" id="MF_00469"/>
    </source>
</evidence>
<comment type="function">
    <text evidence="1">Catalyzes oxygen-dependent 5-hydroxyuridine (ho5U) modification at position 34 in tRNAs.</text>
</comment>
<comment type="catalytic activity">
    <reaction evidence="1">
        <text>uridine(34) in tRNA + AH2 + O2 = 5-hydroxyuridine(34) in tRNA + A + H2O</text>
        <dbReference type="Rhea" id="RHEA:64224"/>
        <dbReference type="Rhea" id="RHEA-COMP:11727"/>
        <dbReference type="Rhea" id="RHEA-COMP:13381"/>
        <dbReference type="ChEBI" id="CHEBI:13193"/>
        <dbReference type="ChEBI" id="CHEBI:15377"/>
        <dbReference type="ChEBI" id="CHEBI:15379"/>
        <dbReference type="ChEBI" id="CHEBI:17499"/>
        <dbReference type="ChEBI" id="CHEBI:65315"/>
        <dbReference type="ChEBI" id="CHEBI:136877"/>
    </reaction>
</comment>
<comment type="similarity">
    <text evidence="1">Belongs to the TrhO family.</text>
</comment>
<organism>
    <name type="scientific">Wolbachia pipientis wMel</name>
    <dbReference type="NCBI Taxonomy" id="163164"/>
    <lineage>
        <taxon>Bacteria</taxon>
        <taxon>Pseudomonadati</taxon>
        <taxon>Pseudomonadota</taxon>
        <taxon>Alphaproteobacteria</taxon>
        <taxon>Rickettsiales</taxon>
        <taxon>Anaplasmataceae</taxon>
        <taxon>Wolbachieae</taxon>
        <taxon>Wolbachia</taxon>
    </lineage>
</organism>
<accession>Q73G32</accession>
<protein>
    <recommendedName>
        <fullName evidence="1">tRNA uridine(34) hydroxylase</fullName>
        <ecNumber evidence="1">1.14.-.-</ecNumber>
    </recommendedName>
    <alternativeName>
        <fullName evidence="1">tRNA hydroxylation protein O</fullName>
    </alternativeName>
</protein>
<dbReference type="EC" id="1.14.-.-" evidence="1"/>
<dbReference type="EMBL" id="AE017196">
    <property type="protein sequence ID" value="AAS14786.1"/>
    <property type="molecule type" value="Genomic_DNA"/>
</dbReference>
<dbReference type="RefSeq" id="WP_010963056.1">
    <property type="nucleotide sequence ID" value="NZ_OX384529.1"/>
</dbReference>
<dbReference type="SMR" id="Q73G32"/>
<dbReference type="EnsemblBacteria" id="AAS14786">
    <property type="protein sequence ID" value="AAS14786"/>
    <property type="gene ID" value="WD_1135"/>
</dbReference>
<dbReference type="KEGG" id="wol:WD_1135"/>
<dbReference type="eggNOG" id="COG1054">
    <property type="taxonomic scope" value="Bacteria"/>
</dbReference>
<dbReference type="Proteomes" id="UP000008215">
    <property type="component" value="Chromosome"/>
</dbReference>
<dbReference type="GO" id="GO:0016705">
    <property type="term" value="F:oxidoreductase activity, acting on paired donors, with incorporation or reduction of molecular oxygen"/>
    <property type="evidence" value="ECO:0007669"/>
    <property type="project" value="UniProtKB-UniRule"/>
</dbReference>
<dbReference type="GO" id="GO:0006400">
    <property type="term" value="P:tRNA modification"/>
    <property type="evidence" value="ECO:0007669"/>
    <property type="project" value="UniProtKB-UniRule"/>
</dbReference>
<dbReference type="CDD" id="cd01518">
    <property type="entry name" value="RHOD_YceA"/>
    <property type="match status" value="1"/>
</dbReference>
<dbReference type="Gene3D" id="3.30.70.100">
    <property type="match status" value="1"/>
</dbReference>
<dbReference type="Gene3D" id="3.40.250.10">
    <property type="entry name" value="Rhodanese-like domain"/>
    <property type="match status" value="1"/>
</dbReference>
<dbReference type="HAMAP" id="MF_00469">
    <property type="entry name" value="TrhO"/>
    <property type="match status" value="1"/>
</dbReference>
<dbReference type="InterPro" id="IPR001763">
    <property type="entry name" value="Rhodanese-like_dom"/>
</dbReference>
<dbReference type="InterPro" id="IPR036873">
    <property type="entry name" value="Rhodanese-like_dom_sf"/>
</dbReference>
<dbReference type="InterPro" id="IPR020936">
    <property type="entry name" value="TrhO"/>
</dbReference>
<dbReference type="InterPro" id="IPR040503">
    <property type="entry name" value="TRHO_N"/>
</dbReference>
<dbReference type="NCBIfam" id="NF001136">
    <property type="entry name" value="PRK00142.1-4"/>
    <property type="match status" value="1"/>
</dbReference>
<dbReference type="PANTHER" id="PTHR43268:SF3">
    <property type="entry name" value="RHODANESE-LIKE DOMAIN-CONTAINING PROTEIN 7-RELATED"/>
    <property type="match status" value="1"/>
</dbReference>
<dbReference type="PANTHER" id="PTHR43268">
    <property type="entry name" value="THIOSULFATE SULFURTRANSFERASE/RHODANESE-LIKE DOMAIN-CONTAINING PROTEIN 2"/>
    <property type="match status" value="1"/>
</dbReference>
<dbReference type="Pfam" id="PF00581">
    <property type="entry name" value="Rhodanese"/>
    <property type="match status" value="1"/>
</dbReference>
<dbReference type="Pfam" id="PF17773">
    <property type="entry name" value="UPF0176_N"/>
    <property type="match status" value="1"/>
</dbReference>
<dbReference type="SMART" id="SM00450">
    <property type="entry name" value="RHOD"/>
    <property type="match status" value="1"/>
</dbReference>
<dbReference type="SUPFAM" id="SSF52821">
    <property type="entry name" value="Rhodanese/Cell cycle control phosphatase"/>
    <property type="match status" value="1"/>
</dbReference>
<dbReference type="PROSITE" id="PS50206">
    <property type="entry name" value="RHODANESE_3"/>
    <property type="match status" value="1"/>
</dbReference>
<reference key="1">
    <citation type="journal article" date="2004" name="PLoS Biol.">
        <title>Phylogenomics of the reproductive parasite Wolbachia pipientis wMel: a streamlined genome overrun by mobile genetic elements.</title>
        <authorList>
            <person name="Wu M."/>
            <person name="Sun L.V."/>
            <person name="Vamathevan J.J."/>
            <person name="Riegler M."/>
            <person name="DeBoy R.T."/>
            <person name="Brownlie J.C."/>
            <person name="McGraw E.A."/>
            <person name="Martin W."/>
            <person name="Esser C."/>
            <person name="Ahmadinejad N."/>
            <person name="Wiegand C."/>
            <person name="Madupu R."/>
            <person name="Beanan M.J."/>
            <person name="Brinkac L.M."/>
            <person name="Daugherty S.C."/>
            <person name="Durkin A.S."/>
            <person name="Kolonay J.F."/>
            <person name="Nelson W.C."/>
            <person name="Mohamoud Y."/>
            <person name="Lee P."/>
            <person name="Berry K.J."/>
            <person name="Young M.B."/>
            <person name="Utterback T.R."/>
            <person name="Weidman J.F."/>
            <person name="Nierman W.C."/>
            <person name="Paulsen I.T."/>
            <person name="Nelson K.E."/>
            <person name="Tettelin H."/>
            <person name="O'Neill S.L."/>
            <person name="Eisen J.A."/>
        </authorList>
    </citation>
    <scope>NUCLEOTIDE SEQUENCE [LARGE SCALE GENOMIC DNA]</scope>
</reference>
<feature type="chain" id="PRO_0000161537" description="tRNA uridine(34) hydroxylase">
    <location>
        <begin position="1"/>
        <end position="275"/>
    </location>
</feature>
<feature type="domain" description="Rhodanese" evidence="1">
    <location>
        <begin position="121"/>
        <end position="214"/>
    </location>
</feature>
<feature type="active site" description="Cysteine persulfide intermediate" evidence="1">
    <location>
        <position position="174"/>
    </location>
</feature>
<sequence length="275" mass="31596">MSFVIATFYHFVELSNYYDMKDEIKAACNNVELKGTILLAEEGVNATISGERNAIDKIFDFLRSDYRLRDLTWKESAAEYQPFSKMKVKLKREIVNLGVSNLDISLRGKYVDPEHWDDFTSQPDVLVIDTRNEYEVKLGKFKNAINPHTQCFREFPQWTESFSESKDLKVAMYCTGGIRCEKSTAYMKSLGFSDVYHLKGGILSYLEKTYNKNGNWKGECFVFDDRIAVDNSLTPSNTIKCIFCSNQVSTDKLKSVPRGQVVCSDCKLQCYSYNK</sequence>